<sequence length="78" mass="9037">MSRVCQVTGKRPVTGNNRSHALNATKRRFLPNLHSHRFWVESEKRFVTLRVSAKGMRVIDKKGIDTVLAELRARSEKY</sequence>
<organism>
    <name type="scientific">Shigella boydii serotype 4 (strain Sb227)</name>
    <dbReference type="NCBI Taxonomy" id="300268"/>
    <lineage>
        <taxon>Bacteria</taxon>
        <taxon>Pseudomonadati</taxon>
        <taxon>Pseudomonadota</taxon>
        <taxon>Gammaproteobacteria</taxon>
        <taxon>Enterobacterales</taxon>
        <taxon>Enterobacteriaceae</taxon>
        <taxon>Shigella</taxon>
    </lineage>
</organism>
<keyword id="KW-0687">Ribonucleoprotein</keyword>
<keyword id="KW-0689">Ribosomal protein</keyword>
<comment type="similarity">
    <text evidence="1">Belongs to the bacterial ribosomal protein bL28 family.</text>
</comment>
<name>RL28_SHIBS</name>
<evidence type="ECO:0000255" key="1">
    <source>
        <dbReference type="HAMAP-Rule" id="MF_00373"/>
    </source>
</evidence>
<evidence type="ECO:0000305" key="2"/>
<accession>Q31UY9</accession>
<gene>
    <name evidence="1" type="primary">rpmB</name>
    <name type="ordered locus">SBO_3639</name>
</gene>
<dbReference type="EMBL" id="CP000036">
    <property type="protein sequence ID" value="ABB68119.1"/>
    <property type="molecule type" value="Genomic_DNA"/>
</dbReference>
<dbReference type="RefSeq" id="WP_004987425.1">
    <property type="nucleotide sequence ID" value="NC_007613.1"/>
</dbReference>
<dbReference type="SMR" id="Q31UY9"/>
<dbReference type="KEGG" id="sbo:SBO_3639"/>
<dbReference type="HOGENOM" id="CLU_064548_3_1_6"/>
<dbReference type="Proteomes" id="UP000007067">
    <property type="component" value="Chromosome"/>
</dbReference>
<dbReference type="GO" id="GO:0022625">
    <property type="term" value="C:cytosolic large ribosomal subunit"/>
    <property type="evidence" value="ECO:0007669"/>
    <property type="project" value="TreeGrafter"/>
</dbReference>
<dbReference type="GO" id="GO:0003735">
    <property type="term" value="F:structural constituent of ribosome"/>
    <property type="evidence" value="ECO:0007669"/>
    <property type="project" value="InterPro"/>
</dbReference>
<dbReference type="GO" id="GO:0006412">
    <property type="term" value="P:translation"/>
    <property type="evidence" value="ECO:0007669"/>
    <property type="project" value="UniProtKB-UniRule"/>
</dbReference>
<dbReference type="FunFam" id="2.30.170.40:FF:000001">
    <property type="entry name" value="50S ribosomal protein L28"/>
    <property type="match status" value="1"/>
</dbReference>
<dbReference type="Gene3D" id="2.30.170.40">
    <property type="entry name" value="Ribosomal protein L28/L24"/>
    <property type="match status" value="1"/>
</dbReference>
<dbReference type="HAMAP" id="MF_00373">
    <property type="entry name" value="Ribosomal_bL28"/>
    <property type="match status" value="1"/>
</dbReference>
<dbReference type="InterPro" id="IPR026569">
    <property type="entry name" value="Ribosomal_bL28"/>
</dbReference>
<dbReference type="InterPro" id="IPR034704">
    <property type="entry name" value="Ribosomal_bL28/bL31-like_sf"/>
</dbReference>
<dbReference type="InterPro" id="IPR001383">
    <property type="entry name" value="Ribosomal_bL28_bact-type"/>
</dbReference>
<dbReference type="InterPro" id="IPR037147">
    <property type="entry name" value="Ribosomal_bL28_sf"/>
</dbReference>
<dbReference type="NCBIfam" id="TIGR00009">
    <property type="entry name" value="L28"/>
    <property type="match status" value="1"/>
</dbReference>
<dbReference type="PANTHER" id="PTHR13528">
    <property type="entry name" value="39S RIBOSOMAL PROTEIN L28, MITOCHONDRIAL"/>
    <property type="match status" value="1"/>
</dbReference>
<dbReference type="PANTHER" id="PTHR13528:SF2">
    <property type="entry name" value="LARGE RIBOSOMAL SUBUNIT PROTEIN BL28M"/>
    <property type="match status" value="1"/>
</dbReference>
<dbReference type="Pfam" id="PF00830">
    <property type="entry name" value="Ribosomal_L28"/>
    <property type="match status" value="1"/>
</dbReference>
<dbReference type="SUPFAM" id="SSF143800">
    <property type="entry name" value="L28p-like"/>
    <property type="match status" value="1"/>
</dbReference>
<protein>
    <recommendedName>
        <fullName evidence="1">Large ribosomal subunit protein bL28</fullName>
    </recommendedName>
    <alternativeName>
        <fullName evidence="2">50S ribosomal protein L28</fullName>
    </alternativeName>
</protein>
<reference key="1">
    <citation type="journal article" date="2005" name="Nucleic Acids Res.">
        <title>Genome dynamics and diversity of Shigella species, the etiologic agents of bacillary dysentery.</title>
        <authorList>
            <person name="Yang F."/>
            <person name="Yang J."/>
            <person name="Zhang X."/>
            <person name="Chen L."/>
            <person name="Jiang Y."/>
            <person name="Yan Y."/>
            <person name="Tang X."/>
            <person name="Wang J."/>
            <person name="Xiong Z."/>
            <person name="Dong J."/>
            <person name="Xue Y."/>
            <person name="Zhu Y."/>
            <person name="Xu X."/>
            <person name="Sun L."/>
            <person name="Chen S."/>
            <person name="Nie H."/>
            <person name="Peng J."/>
            <person name="Xu J."/>
            <person name="Wang Y."/>
            <person name="Yuan Z."/>
            <person name="Wen Y."/>
            <person name="Yao Z."/>
            <person name="Shen Y."/>
            <person name="Qiang B."/>
            <person name="Hou Y."/>
            <person name="Yu J."/>
            <person name="Jin Q."/>
        </authorList>
    </citation>
    <scope>NUCLEOTIDE SEQUENCE [LARGE SCALE GENOMIC DNA]</scope>
    <source>
        <strain>Sb227</strain>
    </source>
</reference>
<proteinExistence type="inferred from homology"/>
<feature type="chain" id="PRO_1000007355" description="Large ribosomal subunit protein bL28">
    <location>
        <begin position="1"/>
        <end position="78"/>
    </location>
</feature>